<feature type="chain" id="PRO_0000226937" description="Uncharacterized protein ycf72">
    <location>
        <begin position="1"/>
        <end position="137"/>
    </location>
</feature>
<protein>
    <recommendedName>
        <fullName>Uncharacterized protein ycf72</fullName>
    </recommendedName>
    <alternativeName>
        <fullName>ORF137</fullName>
    </alternativeName>
</protein>
<sequence>MGAFPSPPPWGWSTGFITTPLTTGRLPSQHLDPALPKLFWFTPTLPTCPTVAKQFWDTKRTSPDGNLKVANLPSFAISFATAPAALANCPPLPRVISMLCMAVPKGISVEVDSSFLSKNPFPNCTSFFQSIRLSRCI</sequence>
<gene>
    <name type="primary">ycf72-1</name>
    <name type="ordered locus">PS009</name>
</gene>
<gene>
    <name type="primary">ycf72-2</name>
    <name type="ordered locus">PS078</name>
</gene>
<geneLocation type="chloroplast"/>
<accession>Q6ENS0</accession>
<comment type="subcellular location">
    <subcellularLocation>
        <location>Plastid</location>
        <location>Chloroplast</location>
    </subcellularLocation>
</comment>
<comment type="similarity">
    <text evidence="1">Belongs to the ycf72 family.</text>
</comment>
<name>YCF72_SACOF</name>
<keyword id="KW-0150">Chloroplast</keyword>
<keyword id="KW-0934">Plastid</keyword>
<reference key="1">
    <citation type="journal article" date="2004" name="DNA Res.">
        <title>Complete nucleotide sequence of the sugarcane (Saccharum officinarum) chloroplast genome: a comparative analysis of four monocot chloroplast genomes.</title>
        <authorList>
            <person name="Asano T."/>
            <person name="Tsudzuki T."/>
            <person name="Takahashi S."/>
            <person name="Shimada H."/>
            <person name="Kadowaki K."/>
        </authorList>
    </citation>
    <scope>NUCLEOTIDE SEQUENCE [LARGE SCALE GENOMIC DNA]</scope>
</reference>
<dbReference type="EMBL" id="AP006714">
    <property type="protein sequence ID" value="BAD27336.1"/>
    <property type="molecule type" value="Genomic_DNA"/>
</dbReference>
<dbReference type="EMBL" id="AP006714">
    <property type="protein sequence ID" value="BAD27385.1"/>
    <property type="molecule type" value="Genomic_DNA"/>
</dbReference>
<dbReference type="GO" id="GO:0009507">
    <property type="term" value="C:chloroplast"/>
    <property type="evidence" value="ECO:0007669"/>
    <property type="project" value="UniProtKB-SubCell"/>
</dbReference>
<dbReference type="InterPro" id="IPR038860">
    <property type="entry name" value="YCF72"/>
</dbReference>
<dbReference type="PANTHER" id="PTHR37377">
    <property type="entry name" value="RIBULOSE BISPHOSPHATE CARBOXYLASE LARGE CHAIN"/>
    <property type="match status" value="1"/>
</dbReference>
<dbReference type="PANTHER" id="PTHR37377:SF2">
    <property type="entry name" value="SMALL RIBOSOMAL SUBUNIT PROTEIN US2C"/>
    <property type="match status" value="1"/>
</dbReference>
<organism>
    <name type="scientific">Saccharum officinarum</name>
    <name type="common">Sugarcane</name>
    <dbReference type="NCBI Taxonomy" id="4547"/>
    <lineage>
        <taxon>Eukaryota</taxon>
        <taxon>Viridiplantae</taxon>
        <taxon>Streptophyta</taxon>
        <taxon>Embryophyta</taxon>
        <taxon>Tracheophyta</taxon>
        <taxon>Spermatophyta</taxon>
        <taxon>Magnoliopsida</taxon>
        <taxon>Liliopsida</taxon>
        <taxon>Poales</taxon>
        <taxon>Poaceae</taxon>
        <taxon>PACMAD clade</taxon>
        <taxon>Panicoideae</taxon>
        <taxon>Andropogonodae</taxon>
        <taxon>Andropogoneae</taxon>
        <taxon>Saccharinae</taxon>
        <taxon>Saccharum</taxon>
        <taxon>Saccharum officinarum species complex</taxon>
    </lineage>
</organism>
<evidence type="ECO:0000305" key="1"/>
<proteinExistence type="inferred from homology"/>